<protein>
    <recommendedName>
        <fullName evidence="1">Large ribosomal subunit protein uL11</fullName>
    </recommendedName>
    <alternativeName>
        <fullName evidence="2">50S ribosomal protein L11</fullName>
    </alternativeName>
</protein>
<proteinExistence type="inferred from homology"/>
<evidence type="ECO:0000255" key="1">
    <source>
        <dbReference type="HAMAP-Rule" id="MF_00736"/>
    </source>
</evidence>
<evidence type="ECO:0000305" key="2"/>
<comment type="function">
    <text evidence="1">Forms part of the ribosomal stalk which helps the ribosome interact with GTP-bound translation factors.</text>
</comment>
<comment type="subunit">
    <text evidence="1">Part of the ribosomal stalk of the 50S ribosomal subunit. Interacts with L10 and the large rRNA to form the base of the stalk. L10 forms an elongated spine to which L12 dimers bind in a sequential fashion forming a multimeric L10(L12)X complex.</text>
</comment>
<comment type="PTM">
    <text evidence="1">One or more lysine residues are methylated.</text>
</comment>
<comment type="similarity">
    <text evidence="1">Belongs to the universal ribosomal protein uL11 family.</text>
</comment>
<gene>
    <name evidence="1" type="primary">rplK</name>
    <name type="ordered locus">AYWB_465</name>
</gene>
<organism>
    <name type="scientific">Aster yellows witches'-broom phytoplasma (strain AYWB)</name>
    <dbReference type="NCBI Taxonomy" id="322098"/>
    <lineage>
        <taxon>Bacteria</taxon>
        <taxon>Bacillati</taxon>
        <taxon>Mycoplasmatota</taxon>
        <taxon>Mollicutes</taxon>
        <taxon>Acholeplasmatales</taxon>
        <taxon>Acholeplasmataceae</taxon>
        <taxon>Candidatus Phytoplasma</taxon>
        <taxon>16SrI (Aster yellows group)</taxon>
    </lineage>
</organism>
<keyword id="KW-0488">Methylation</keyword>
<keyword id="KW-0687">Ribonucleoprotein</keyword>
<keyword id="KW-0689">Ribosomal protein</keyword>
<keyword id="KW-0694">RNA-binding</keyword>
<keyword id="KW-0699">rRNA-binding</keyword>
<sequence length="141" mass="15117">MAKKVVKTVKLQIPAGKANPAPPVGPALGQAQVNIPSFCSQFNETTKDQMGFVIPVIISVYEDRTFTFVTKTPPASDLLKKAAKIESGSANASQTKVATITHKQVEEIANLKLSDLNAYCVEKACKIIEGTARNMGILVKD</sequence>
<accession>Q2NJ11</accession>
<feature type="chain" id="PRO_0000258118" description="Large ribosomal subunit protein uL11">
    <location>
        <begin position="1"/>
        <end position="141"/>
    </location>
</feature>
<reference key="1">
    <citation type="journal article" date="2006" name="J. Bacteriol.">
        <title>Living with genome instability: the adaptation of phytoplasmas to diverse environments of their insect and plant hosts.</title>
        <authorList>
            <person name="Bai X."/>
            <person name="Zhang J."/>
            <person name="Ewing A."/>
            <person name="Miller S.A."/>
            <person name="Jancso Radek A."/>
            <person name="Shevchenko D.V."/>
            <person name="Tsukerman K."/>
            <person name="Walunas T."/>
            <person name="Lapidus A."/>
            <person name="Campbell J.W."/>
            <person name="Hogenhout S.A."/>
        </authorList>
    </citation>
    <scope>NUCLEOTIDE SEQUENCE [LARGE SCALE GENOMIC DNA]</scope>
    <source>
        <strain>AYWB</strain>
    </source>
</reference>
<name>RL11_AYWBP</name>
<dbReference type="EMBL" id="CP000061">
    <property type="protein sequence ID" value="ABC65582.1"/>
    <property type="molecule type" value="Genomic_DNA"/>
</dbReference>
<dbReference type="RefSeq" id="WP_011412746.1">
    <property type="nucleotide sequence ID" value="NC_007716.1"/>
</dbReference>
<dbReference type="SMR" id="Q2NJ11"/>
<dbReference type="STRING" id="322098.AYWB_465"/>
<dbReference type="KEGG" id="ayw:AYWB_465"/>
<dbReference type="eggNOG" id="COG0080">
    <property type="taxonomic scope" value="Bacteria"/>
</dbReference>
<dbReference type="HOGENOM" id="CLU_074237_2_1_14"/>
<dbReference type="OrthoDB" id="9802408at2"/>
<dbReference type="PhylomeDB" id="Q2NJ11"/>
<dbReference type="Proteomes" id="UP000001934">
    <property type="component" value="Chromosome"/>
</dbReference>
<dbReference type="GO" id="GO:0022625">
    <property type="term" value="C:cytosolic large ribosomal subunit"/>
    <property type="evidence" value="ECO:0007669"/>
    <property type="project" value="TreeGrafter"/>
</dbReference>
<dbReference type="GO" id="GO:0070180">
    <property type="term" value="F:large ribosomal subunit rRNA binding"/>
    <property type="evidence" value="ECO:0007669"/>
    <property type="project" value="UniProtKB-UniRule"/>
</dbReference>
<dbReference type="GO" id="GO:0003735">
    <property type="term" value="F:structural constituent of ribosome"/>
    <property type="evidence" value="ECO:0007669"/>
    <property type="project" value="InterPro"/>
</dbReference>
<dbReference type="GO" id="GO:0006412">
    <property type="term" value="P:translation"/>
    <property type="evidence" value="ECO:0007669"/>
    <property type="project" value="UniProtKB-UniRule"/>
</dbReference>
<dbReference type="CDD" id="cd00349">
    <property type="entry name" value="Ribosomal_L11"/>
    <property type="match status" value="1"/>
</dbReference>
<dbReference type="FunFam" id="1.10.10.250:FF:000001">
    <property type="entry name" value="50S ribosomal protein L11"/>
    <property type="match status" value="1"/>
</dbReference>
<dbReference type="FunFam" id="3.30.1550.10:FF:000005">
    <property type="entry name" value="50S ribosomal protein L11"/>
    <property type="match status" value="1"/>
</dbReference>
<dbReference type="Gene3D" id="1.10.10.250">
    <property type="entry name" value="Ribosomal protein L11, C-terminal domain"/>
    <property type="match status" value="1"/>
</dbReference>
<dbReference type="Gene3D" id="3.30.1550.10">
    <property type="entry name" value="Ribosomal protein L11/L12, N-terminal domain"/>
    <property type="match status" value="1"/>
</dbReference>
<dbReference type="HAMAP" id="MF_00736">
    <property type="entry name" value="Ribosomal_uL11"/>
    <property type="match status" value="1"/>
</dbReference>
<dbReference type="InterPro" id="IPR000911">
    <property type="entry name" value="Ribosomal_uL11"/>
</dbReference>
<dbReference type="InterPro" id="IPR006519">
    <property type="entry name" value="Ribosomal_uL11_bac-typ"/>
</dbReference>
<dbReference type="InterPro" id="IPR020783">
    <property type="entry name" value="Ribosomal_uL11_C"/>
</dbReference>
<dbReference type="InterPro" id="IPR036769">
    <property type="entry name" value="Ribosomal_uL11_C_sf"/>
</dbReference>
<dbReference type="InterPro" id="IPR020785">
    <property type="entry name" value="Ribosomal_uL11_CS"/>
</dbReference>
<dbReference type="InterPro" id="IPR020784">
    <property type="entry name" value="Ribosomal_uL11_N"/>
</dbReference>
<dbReference type="InterPro" id="IPR036796">
    <property type="entry name" value="Ribosomal_uL11_N_sf"/>
</dbReference>
<dbReference type="NCBIfam" id="TIGR01632">
    <property type="entry name" value="L11_bact"/>
    <property type="match status" value="1"/>
</dbReference>
<dbReference type="PANTHER" id="PTHR11661">
    <property type="entry name" value="60S RIBOSOMAL PROTEIN L12"/>
    <property type="match status" value="1"/>
</dbReference>
<dbReference type="PANTHER" id="PTHR11661:SF1">
    <property type="entry name" value="LARGE RIBOSOMAL SUBUNIT PROTEIN UL11M"/>
    <property type="match status" value="1"/>
</dbReference>
<dbReference type="Pfam" id="PF00298">
    <property type="entry name" value="Ribosomal_L11"/>
    <property type="match status" value="1"/>
</dbReference>
<dbReference type="Pfam" id="PF03946">
    <property type="entry name" value="Ribosomal_L11_N"/>
    <property type="match status" value="1"/>
</dbReference>
<dbReference type="SMART" id="SM00649">
    <property type="entry name" value="RL11"/>
    <property type="match status" value="1"/>
</dbReference>
<dbReference type="SUPFAM" id="SSF54747">
    <property type="entry name" value="Ribosomal L11/L12e N-terminal domain"/>
    <property type="match status" value="1"/>
</dbReference>
<dbReference type="SUPFAM" id="SSF46906">
    <property type="entry name" value="Ribosomal protein L11, C-terminal domain"/>
    <property type="match status" value="1"/>
</dbReference>
<dbReference type="PROSITE" id="PS00359">
    <property type="entry name" value="RIBOSOMAL_L11"/>
    <property type="match status" value="1"/>
</dbReference>